<comment type="function">
    <text evidence="1">Catalyzes the decarboxylation of four acetate groups of uroporphyrinogen-III to yield coproporphyrinogen-III.</text>
</comment>
<comment type="catalytic activity">
    <reaction evidence="1">
        <text>uroporphyrinogen III + 4 H(+) = coproporphyrinogen III + 4 CO2</text>
        <dbReference type="Rhea" id="RHEA:19865"/>
        <dbReference type="ChEBI" id="CHEBI:15378"/>
        <dbReference type="ChEBI" id="CHEBI:16526"/>
        <dbReference type="ChEBI" id="CHEBI:57308"/>
        <dbReference type="ChEBI" id="CHEBI:57309"/>
        <dbReference type="EC" id="4.1.1.37"/>
    </reaction>
</comment>
<comment type="pathway">
    <text evidence="1">Porphyrin-containing compound metabolism; protoporphyrin-IX biosynthesis; coproporphyrinogen-III from 5-aminolevulinate: step 4/4.</text>
</comment>
<comment type="subunit">
    <text evidence="1">Homodimer.</text>
</comment>
<comment type="subcellular location">
    <subcellularLocation>
        <location evidence="1">Cytoplasm</location>
    </subcellularLocation>
</comment>
<comment type="similarity">
    <text evidence="1">Belongs to the uroporphyrinogen decarboxylase family.</text>
</comment>
<gene>
    <name evidence="1" type="primary">hemE</name>
    <name type="ordered locus">BMA10229_A1580</name>
</gene>
<dbReference type="EC" id="4.1.1.37" evidence="1"/>
<dbReference type="EMBL" id="CP000546">
    <property type="protein sequence ID" value="ABN03192.1"/>
    <property type="molecule type" value="Genomic_DNA"/>
</dbReference>
<dbReference type="RefSeq" id="WP_004195837.1">
    <property type="nucleotide sequence ID" value="NC_008836.1"/>
</dbReference>
<dbReference type="SMR" id="A2S6J1"/>
<dbReference type="GeneID" id="92980634"/>
<dbReference type="KEGG" id="bml:BMA10229_A1580"/>
<dbReference type="HOGENOM" id="CLU_040933_0_0_4"/>
<dbReference type="UniPathway" id="UPA00251">
    <property type="reaction ID" value="UER00321"/>
</dbReference>
<dbReference type="Proteomes" id="UP000002283">
    <property type="component" value="Chromosome I"/>
</dbReference>
<dbReference type="GO" id="GO:0005829">
    <property type="term" value="C:cytosol"/>
    <property type="evidence" value="ECO:0007669"/>
    <property type="project" value="TreeGrafter"/>
</dbReference>
<dbReference type="GO" id="GO:0004853">
    <property type="term" value="F:uroporphyrinogen decarboxylase activity"/>
    <property type="evidence" value="ECO:0007669"/>
    <property type="project" value="UniProtKB-UniRule"/>
</dbReference>
<dbReference type="GO" id="GO:0019353">
    <property type="term" value="P:protoporphyrinogen IX biosynthetic process from glutamate"/>
    <property type="evidence" value="ECO:0007669"/>
    <property type="project" value="TreeGrafter"/>
</dbReference>
<dbReference type="CDD" id="cd00717">
    <property type="entry name" value="URO-D"/>
    <property type="match status" value="1"/>
</dbReference>
<dbReference type="FunFam" id="3.20.20.210:FF:000001">
    <property type="entry name" value="Uroporphyrinogen decarboxylase"/>
    <property type="match status" value="1"/>
</dbReference>
<dbReference type="Gene3D" id="3.20.20.210">
    <property type="match status" value="1"/>
</dbReference>
<dbReference type="HAMAP" id="MF_00218">
    <property type="entry name" value="URO_D"/>
    <property type="match status" value="1"/>
</dbReference>
<dbReference type="InterPro" id="IPR038071">
    <property type="entry name" value="UROD/MetE-like_sf"/>
</dbReference>
<dbReference type="InterPro" id="IPR006361">
    <property type="entry name" value="Uroporphyrinogen_deCO2ase_HemE"/>
</dbReference>
<dbReference type="InterPro" id="IPR000257">
    <property type="entry name" value="Uroporphyrinogen_deCOase"/>
</dbReference>
<dbReference type="NCBIfam" id="TIGR01464">
    <property type="entry name" value="hemE"/>
    <property type="match status" value="1"/>
</dbReference>
<dbReference type="PANTHER" id="PTHR21091">
    <property type="entry name" value="METHYLTETRAHYDROFOLATE:HOMOCYSTEINE METHYLTRANSFERASE RELATED"/>
    <property type="match status" value="1"/>
</dbReference>
<dbReference type="PANTHER" id="PTHR21091:SF169">
    <property type="entry name" value="UROPORPHYRINOGEN DECARBOXYLASE"/>
    <property type="match status" value="1"/>
</dbReference>
<dbReference type="Pfam" id="PF01208">
    <property type="entry name" value="URO-D"/>
    <property type="match status" value="1"/>
</dbReference>
<dbReference type="SUPFAM" id="SSF51726">
    <property type="entry name" value="UROD/MetE-like"/>
    <property type="match status" value="1"/>
</dbReference>
<dbReference type="PROSITE" id="PS00906">
    <property type="entry name" value="UROD_1"/>
    <property type="match status" value="1"/>
</dbReference>
<dbReference type="PROSITE" id="PS00907">
    <property type="entry name" value="UROD_2"/>
    <property type="match status" value="1"/>
</dbReference>
<proteinExistence type="inferred from homology"/>
<organism>
    <name type="scientific">Burkholderia mallei (strain NCTC 10229)</name>
    <dbReference type="NCBI Taxonomy" id="412022"/>
    <lineage>
        <taxon>Bacteria</taxon>
        <taxon>Pseudomonadati</taxon>
        <taxon>Pseudomonadota</taxon>
        <taxon>Betaproteobacteria</taxon>
        <taxon>Burkholderiales</taxon>
        <taxon>Burkholderiaceae</taxon>
        <taxon>Burkholderia</taxon>
        <taxon>pseudomallei group</taxon>
    </lineage>
</organism>
<name>DCUP_BURM9</name>
<evidence type="ECO:0000255" key="1">
    <source>
        <dbReference type="HAMAP-Rule" id="MF_00218"/>
    </source>
</evidence>
<sequence>MAQTLLNDTFLRALLREPTDYTPIWLMRQAGRYLPEYNATRARAGSFLGLAKQPDYATEVTLQPLERFPLDAAILFSDILTIPDAMGLGLDFAAGEGPKFAHPVRTEADVAKLAVPDIGATLGYVTDAVREIRRALTDGEGRQRVPLIGFSGSPWTLACYMVEGGGSDDFRTVKSMAYARPDLMHRILDVNAQAVAAYLNAQIEAGAQAVMIFDTWGGALADGGYQRFSLDYVRRVLAQLKREHDGARVPAIAFTKGGGLWLEELAATGVDAVGLDWTVNLGRARERVAGRVALQGNLDPTILFAPPEAIRAEARAVLDSYGNHPGHVFNLGHGISQFTPPEHVAELVDEVHRHSRAIRSGAGS</sequence>
<protein>
    <recommendedName>
        <fullName evidence="1">Uroporphyrinogen decarboxylase</fullName>
        <shortName evidence="1">UPD</shortName>
        <shortName evidence="1">URO-D</shortName>
        <ecNumber evidence="1">4.1.1.37</ecNumber>
    </recommendedName>
</protein>
<accession>A2S6J1</accession>
<keyword id="KW-0963">Cytoplasm</keyword>
<keyword id="KW-0210">Decarboxylase</keyword>
<keyword id="KW-0456">Lyase</keyword>
<keyword id="KW-0627">Porphyrin biosynthesis</keyword>
<reference key="1">
    <citation type="journal article" date="2010" name="Genome Biol. Evol.">
        <title>Continuing evolution of Burkholderia mallei through genome reduction and large-scale rearrangements.</title>
        <authorList>
            <person name="Losada L."/>
            <person name="Ronning C.M."/>
            <person name="DeShazer D."/>
            <person name="Woods D."/>
            <person name="Fedorova N."/>
            <person name="Kim H.S."/>
            <person name="Shabalina S.A."/>
            <person name="Pearson T.R."/>
            <person name="Brinkac L."/>
            <person name="Tan P."/>
            <person name="Nandi T."/>
            <person name="Crabtree J."/>
            <person name="Badger J."/>
            <person name="Beckstrom-Sternberg S."/>
            <person name="Saqib M."/>
            <person name="Schutzer S.E."/>
            <person name="Keim P."/>
            <person name="Nierman W.C."/>
        </authorList>
    </citation>
    <scope>NUCLEOTIDE SEQUENCE [LARGE SCALE GENOMIC DNA]</scope>
    <source>
        <strain>NCTC 10229</strain>
    </source>
</reference>
<feature type="chain" id="PRO_1000023880" description="Uroporphyrinogen decarboxylase">
    <location>
        <begin position="1"/>
        <end position="364"/>
    </location>
</feature>
<feature type="binding site" evidence="1">
    <location>
        <begin position="28"/>
        <end position="32"/>
    </location>
    <ligand>
        <name>substrate</name>
    </ligand>
</feature>
<feature type="binding site" evidence="1">
    <location>
        <position position="78"/>
    </location>
    <ligand>
        <name>substrate</name>
    </ligand>
</feature>
<feature type="binding site" evidence="1">
    <location>
        <position position="160"/>
    </location>
    <ligand>
        <name>substrate</name>
    </ligand>
</feature>
<feature type="binding site" evidence="1">
    <location>
        <position position="215"/>
    </location>
    <ligand>
        <name>substrate</name>
    </ligand>
</feature>
<feature type="binding site" evidence="1">
    <location>
        <position position="333"/>
    </location>
    <ligand>
        <name>substrate</name>
    </ligand>
</feature>
<feature type="site" description="Transition state stabilizer" evidence="1">
    <location>
        <position position="78"/>
    </location>
</feature>